<evidence type="ECO:0000255" key="1"/>
<evidence type="ECO:0000269" key="2">
    <source>
    </source>
</evidence>
<evidence type="ECO:0000303" key="3">
    <source>
    </source>
</evidence>
<evidence type="ECO:0000305" key="4"/>
<evidence type="ECO:0000312" key="5">
    <source>
        <dbReference type="EMBL" id="AAD08224.1"/>
    </source>
</evidence>
<sequence>MIFSSLFSVVGMAVLFLIAWVFSSNKRAINYRTIVSAFVIQVALGALALYVPLGREMLQGLASGIQSVISYGYEGVRFLFGNLAPNAKGDQGIGGFVFAINVLAIIIFFASLISLLYYLKIMPLFINLIGGALQKCLGTSRAESMSAAANIFVAHTEAPLVIKPYLKSMSDSEIFAVMCVGMASVAGPVLAGYASMGIPLPYLIAASFMSAPGGLLFAKIIYPQNETISSHADVSIEKHVNAIEAIANGASTGLNLALHVGAMLLAFVGMLALINGLLGVVGGFLGMEHLSLGLILGTLLKPLAFMLGIPWSQAGIAGEIIGIKIALNEFVGYMQLLPYLGDNPPLILSEKTKAIITFALCGFANLSSVAMLIGGLGSLVPKKKDLIVRLALKAVLVGTLSNFMSATIAGLFIGLNAH</sequence>
<gene>
    <name evidence="3" type="primary">nupC</name>
    <name evidence="5" type="ordered locus">HP_1180</name>
</gene>
<dbReference type="EMBL" id="AE000511">
    <property type="protein sequence ID" value="AAD08224.1"/>
    <property type="molecule type" value="Genomic_DNA"/>
</dbReference>
<dbReference type="PIR" id="D64667">
    <property type="entry name" value="D64667"/>
</dbReference>
<dbReference type="RefSeq" id="NP_207971.1">
    <property type="nucleotide sequence ID" value="NC_000915.1"/>
</dbReference>
<dbReference type="RefSeq" id="WP_000577889.1">
    <property type="nucleotide sequence ID" value="NC_018939.1"/>
</dbReference>
<dbReference type="SMR" id="O25792"/>
<dbReference type="FunCoup" id="O25792">
    <property type="interactions" value="144"/>
</dbReference>
<dbReference type="IntAct" id="O25792">
    <property type="interactions" value="1"/>
</dbReference>
<dbReference type="STRING" id="85962.HP_1180"/>
<dbReference type="PaxDb" id="85962-C694_06100"/>
<dbReference type="EnsemblBacteria" id="AAD08224">
    <property type="protein sequence ID" value="AAD08224"/>
    <property type="gene ID" value="HP_1180"/>
</dbReference>
<dbReference type="KEGG" id="heo:C694_06100"/>
<dbReference type="KEGG" id="hpy:HP_1180"/>
<dbReference type="PATRIC" id="fig|85962.47.peg.1268"/>
<dbReference type="eggNOG" id="COG1972">
    <property type="taxonomic scope" value="Bacteria"/>
</dbReference>
<dbReference type="InParanoid" id="O25792"/>
<dbReference type="OrthoDB" id="9766455at2"/>
<dbReference type="PhylomeDB" id="O25792"/>
<dbReference type="BioCyc" id="MetaCyc:HP_RS05795-MONOMER"/>
<dbReference type="Proteomes" id="UP000000429">
    <property type="component" value="Chromosome"/>
</dbReference>
<dbReference type="GO" id="GO:0005886">
    <property type="term" value="C:plasma membrane"/>
    <property type="evidence" value="ECO:0000318"/>
    <property type="project" value="GO_Central"/>
</dbReference>
<dbReference type="GO" id="GO:0005337">
    <property type="term" value="F:nucleoside transmembrane transporter activity"/>
    <property type="evidence" value="ECO:0000318"/>
    <property type="project" value="GO_Central"/>
</dbReference>
<dbReference type="GO" id="GO:0015293">
    <property type="term" value="F:symporter activity"/>
    <property type="evidence" value="ECO:0000318"/>
    <property type="project" value="GO_Central"/>
</dbReference>
<dbReference type="GO" id="GO:1901642">
    <property type="term" value="P:nucleoside transmembrane transport"/>
    <property type="evidence" value="ECO:0000318"/>
    <property type="project" value="GO_Central"/>
</dbReference>
<dbReference type="InterPro" id="IPR008276">
    <property type="entry name" value="C_nuclsd_transpt"/>
</dbReference>
<dbReference type="InterPro" id="IPR018270">
    <property type="entry name" value="C_nuclsd_transpt_met_bac"/>
</dbReference>
<dbReference type="InterPro" id="IPR011657">
    <property type="entry name" value="CNT_C_dom"/>
</dbReference>
<dbReference type="InterPro" id="IPR002668">
    <property type="entry name" value="CNT_N_dom"/>
</dbReference>
<dbReference type="InterPro" id="IPR011642">
    <property type="entry name" value="Gate_dom"/>
</dbReference>
<dbReference type="NCBIfam" id="TIGR00804">
    <property type="entry name" value="nupC"/>
    <property type="match status" value="1"/>
</dbReference>
<dbReference type="PANTHER" id="PTHR10590">
    <property type="entry name" value="SODIUM/NUCLEOSIDE COTRANSPORTER"/>
    <property type="match status" value="1"/>
</dbReference>
<dbReference type="PANTHER" id="PTHR10590:SF4">
    <property type="entry name" value="SOLUTE CARRIER FAMILY 28 MEMBER 3"/>
    <property type="match status" value="1"/>
</dbReference>
<dbReference type="Pfam" id="PF07670">
    <property type="entry name" value="Gate"/>
    <property type="match status" value="1"/>
</dbReference>
<dbReference type="Pfam" id="PF07662">
    <property type="entry name" value="Nucleos_tra2_C"/>
    <property type="match status" value="1"/>
</dbReference>
<dbReference type="Pfam" id="PF01773">
    <property type="entry name" value="Nucleos_tra2_N"/>
    <property type="match status" value="1"/>
</dbReference>
<feature type="chain" id="PRO_0000435285" description="Nucleoside permease NupC">
    <location>
        <begin position="1"/>
        <end position="418"/>
    </location>
</feature>
<feature type="transmembrane region" description="Helical" evidence="1">
    <location>
        <begin position="2"/>
        <end position="22"/>
    </location>
</feature>
<feature type="transmembrane region" description="Helical" evidence="1">
    <location>
        <begin position="34"/>
        <end position="54"/>
    </location>
</feature>
<feature type="transmembrane region" description="Helical" evidence="1">
    <location>
        <begin position="93"/>
        <end position="113"/>
    </location>
</feature>
<feature type="transmembrane region" description="Helical" evidence="1">
    <location>
        <begin position="174"/>
        <end position="194"/>
    </location>
</feature>
<feature type="transmembrane region" description="Helical" evidence="1">
    <location>
        <begin position="198"/>
        <end position="218"/>
    </location>
</feature>
<feature type="transmembrane region" description="Helical" evidence="1">
    <location>
        <begin position="264"/>
        <end position="284"/>
    </location>
</feature>
<feature type="transmembrane region" description="Helical" evidence="1">
    <location>
        <begin position="292"/>
        <end position="314"/>
    </location>
</feature>
<feature type="transmembrane region" description="Helical" evidence="1">
    <location>
        <begin position="354"/>
        <end position="374"/>
    </location>
</feature>
<feature type="transmembrane region" description="Helical" evidence="1">
    <location>
        <begin position="395"/>
        <end position="415"/>
    </location>
</feature>
<organism>
    <name type="scientific">Helicobacter pylori (strain ATCC 700392 / 26695)</name>
    <name type="common">Campylobacter pylori</name>
    <dbReference type="NCBI Taxonomy" id="85962"/>
    <lineage>
        <taxon>Bacteria</taxon>
        <taxon>Pseudomonadati</taxon>
        <taxon>Campylobacterota</taxon>
        <taxon>Epsilonproteobacteria</taxon>
        <taxon>Campylobacterales</taxon>
        <taxon>Helicobacteraceae</taxon>
        <taxon>Helicobacter</taxon>
    </lineage>
</organism>
<accession>O25792</accession>
<reference key="1">
    <citation type="journal article" date="1997" name="Nature">
        <title>The complete genome sequence of the gastric pathogen Helicobacter pylori.</title>
        <authorList>
            <person name="Tomb J.-F."/>
            <person name="White O."/>
            <person name="Kerlavage A.R."/>
            <person name="Clayton R.A."/>
            <person name="Sutton G.G."/>
            <person name="Fleischmann R.D."/>
            <person name="Ketchum K.A."/>
            <person name="Klenk H.-P."/>
            <person name="Gill S.R."/>
            <person name="Dougherty B.A."/>
            <person name="Nelson K.E."/>
            <person name="Quackenbush J."/>
            <person name="Zhou L."/>
            <person name="Kirkness E.F."/>
            <person name="Peterson S.N."/>
            <person name="Loftus B.J."/>
            <person name="Richardson D.L."/>
            <person name="Dodson R.J."/>
            <person name="Khalak H.G."/>
            <person name="Glodek A."/>
            <person name="McKenney K."/>
            <person name="FitzGerald L.M."/>
            <person name="Lee N."/>
            <person name="Adams M.D."/>
            <person name="Hickey E.K."/>
            <person name="Berg D.E."/>
            <person name="Gocayne J.D."/>
            <person name="Utterback T.R."/>
            <person name="Peterson J.D."/>
            <person name="Kelley J.M."/>
            <person name="Cotton M.D."/>
            <person name="Weidman J.F."/>
            <person name="Fujii C."/>
            <person name="Bowman C."/>
            <person name="Watthey L."/>
            <person name="Wallin E."/>
            <person name="Hayes W.S."/>
            <person name="Borodovsky M."/>
            <person name="Karp P.D."/>
            <person name="Smith H.O."/>
            <person name="Fraser C.M."/>
            <person name="Venter J.C."/>
        </authorList>
    </citation>
    <scope>NUCLEOTIDE SEQUENCE [LARGE SCALE GENOMIC DNA]</scope>
    <source>
        <strain>ATCC 700392 / 26695</strain>
    </source>
</reference>
<reference key="2">
    <citation type="journal article" date="2012" name="PLoS ONE">
        <title>Efficiency of purine utilization by Helicobacter pylori: roles for adenosine deaminase and a NupC homolog.</title>
        <authorList>
            <person name="Miller E.F."/>
            <person name="Vaish S."/>
            <person name="Maier R.J."/>
        </authorList>
    </citation>
    <scope>FUNCTION</scope>
    <scope>DISRUPTION PHENOTYPE</scope>
    <source>
        <strain>ATCC 700392 / 26695</strain>
    </source>
</reference>
<comment type="function">
    <text evidence="2">Involved in purine nucleosides uptake. Could also be involved in uptake of nucleobases.</text>
</comment>
<comment type="subcellular location">
    <subcellularLocation>
        <location evidence="4">Cell inner membrane</location>
        <topology evidence="1">Multi-pass membrane protein</topology>
    </subcellularLocation>
</comment>
<comment type="disruption phenotype">
    <text evidence="2">Mutant is deficient for transport of inosine, guanosine or adenosine.</text>
</comment>
<comment type="similarity">
    <text evidence="4">Belongs to the concentrative nucleoside transporter (CNT) (TC 2.A.41) family.</text>
</comment>
<protein>
    <recommendedName>
        <fullName evidence="4">Nucleoside permease NupC</fullName>
    </recommendedName>
</protein>
<keyword id="KW-0997">Cell inner membrane</keyword>
<keyword id="KW-1003">Cell membrane</keyword>
<keyword id="KW-0472">Membrane</keyword>
<keyword id="KW-1185">Reference proteome</keyword>
<keyword id="KW-0812">Transmembrane</keyword>
<keyword id="KW-1133">Transmembrane helix</keyword>
<proteinExistence type="inferred from homology"/>
<name>NUPC_HELPY</name>